<organism>
    <name type="scientific">Helicobacter pylori (strain G27)</name>
    <dbReference type="NCBI Taxonomy" id="563041"/>
    <lineage>
        <taxon>Bacteria</taxon>
        <taxon>Pseudomonadati</taxon>
        <taxon>Campylobacterota</taxon>
        <taxon>Epsilonproteobacteria</taxon>
        <taxon>Campylobacterales</taxon>
        <taxon>Helicobacteraceae</taxon>
        <taxon>Helicobacter</taxon>
    </lineage>
</organism>
<name>COAD_HELPG</name>
<reference key="1">
    <citation type="journal article" date="2009" name="J. Bacteriol.">
        <title>The complete genome sequence of Helicobacter pylori strain G27.</title>
        <authorList>
            <person name="Baltrus D.A."/>
            <person name="Amieva M.R."/>
            <person name="Covacci A."/>
            <person name="Lowe T.M."/>
            <person name="Merrell D.S."/>
            <person name="Ottemann K.M."/>
            <person name="Stein M."/>
            <person name="Salama N.R."/>
            <person name="Guillemin K."/>
        </authorList>
    </citation>
    <scope>NUCLEOTIDE SEQUENCE [LARGE SCALE GENOMIC DNA]</scope>
    <source>
        <strain>G27</strain>
    </source>
</reference>
<evidence type="ECO:0000255" key="1">
    <source>
        <dbReference type="HAMAP-Rule" id="MF_00151"/>
    </source>
</evidence>
<comment type="function">
    <text evidence="1">Reversibly transfers an adenylyl group from ATP to 4'-phosphopantetheine, yielding dephospho-CoA (dPCoA) and pyrophosphate.</text>
</comment>
<comment type="catalytic activity">
    <reaction evidence="1">
        <text>(R)-4'-phosphopantetheine + ATP + H(+) = 3'-dephospho-CoA + diphosphate</text>
        <dbReference type="Rhea" id="RHEA:19801"/>
        <dbReference type="ChEBI" id="CHEBI:15378"/>
        <dbReference type="ChEBI" id="CHEBI:30616"/>
        <dbReference type="ChEBI" id="CHEBI:33019"/>
        <dbReference type="ChEBI" id="CHEBI:57328"/>
        <dbReference type="ChEBI" id="CHEBI:61723"/>
        <dbReference type="EC" id="2.7.7.3"/>
    </reaction>
</comment>
<comment type="cofactor">
    <cofactor evidence="1">
        <name>Mg(2+)</name>
        <dbReference type="ChEBI" id="CHEBI:18420"/>
    </cofactor>
</comment>
<comment type="pathway">
    <text evidence="1">Cofactor biosynthesis; coenzyme A biosynthesis; CoA from (R)-pantothenate: step 4/5.</text>
</comment>
<comment type="subunit">
    <text evidence="1">Homohexamer.</text>
</comment>
<comment type="subcellular location">
    <subcellularLocation>
        <location evidence="1">Cytoplasm</location>
    </subcellularLocation>
</comment>
<comment type="similarity">
    <text evidence="1">Belongs to the bacterial CoaD family.</text>
</comment>
<accession>B5Z994</accession>
<keyword id="KW-0067">ATP-binding</keyword>
<keyword id="KW-0173">Coenzyme A biosynthesis</keyword>
<keyword id="KW-0963">Cytoplasm</keyword>
<keyword id="KW-0460">Magnesium</keyword>
<keyword id="KW-0547">Nucleotide-binding</keyword>
<keyword id="KW-0548">Nucleotidyltransferase</keyword>
<keyword id="KW-1185">Reference proteome</keyword>
<keyword id="KW-0808">Transferase</keyword>
<feature type="chain" id="PRO_1000096801" description="Phosphopantetheine adenylyltransferase">
    <location>
        <begin position="1"/>
        <end position="157"/>
    </location>
</feature>
<feature type="binding site" evidence="1">
    <location>
        <begin position="10"/>
        <end position="11"/>
    </location>
    <ligand>
        <name>ATP</name>
        <dbReference type="ChEBI" id="CHEBI:30616"/>
    </ligand>
</feature>
<feature type="binding site" evidence="1">
    <location>
        <position position="10"/>
    </location>
    <ligand>
        <name>substrate</name>
    </ligand>
</feature>
<feature type="binding site" evidence="1">
    <location>
        <position position="18"/>
    </location>
    <ligand>
        <name>ATP</name>
        <dbReference type="ChEBI" id="CHEBI:30616"/>
    </ligand>
</feature>
<feature type="binding site" evidence="1">
    <location>
        <position position="42"/>
    </location>
    <ligand>
        <name>substrate</name>
    </ligand>
</feature>
<feature type="binding site" evidence="1">
    <location>
        <position position="74"/>
    </location>
    <ligand>
        <name>substrate</name>
    </ligand>
</feature>
<feature type="binding site" evidence="1">
    <location>
        <position position="88"/>
    </location>
    <ligand>
        <name>substrate</name>
    </ligand>
</feature>
<feature type="binding site" evidence="1">
    <location>
        <begin position="89"/>
        <end position="91"/>
    </location>
    <ligand>
        <name>ATP</name>
        <dbReference type="ChEBI" id="CHEBI:30616"/>
    </ligand>
</feature>
<feature type="binding site" evidence="1">
    <location>
        <position position="99"/>
    </location>
    <ligand>
        <name>ATP</name>
        <dbReference type="ChEBI" id="CHEBI:30616"/>
    </ligand>
</feature>
<feature type="binding site" evidence="1">
    <location>
        <begin position="124"/>
        <end position="130"/>
    </location>
    <ligand>
        <name>ATP</name>
        <dbReference type="ChEBI" id="CHEBI:30616"/>
    </ligand>
</feature>
<feature type="site" description="Transition state stabilizer" evidence="1">
    <location>
        <position position="18"/>
    </location>
</feature>
<protein>
    <recommendedName>
        <fullName evidence="1">Phosphopantetheine adenylyltransferase</fullName>
        <ecNumber evidence="1">2.7.7.3</ecNumber>
    </recommendedName>
    <alternativeName>
        <fullName evidence="1">Dephospho-CoA pyrophosphorylase</fullName>
    </alternativeName>
    <alternativeName>
        <fullName evidence="1">Pantetheine-phosphate adenylyltransferase</fullName>
        <shortName evidence="1">PPAT</shortName>
    </alternativeName>
</protein>
<proteinExistence type="inferred from homology"/>
<gene>
    <name evidence="1" type="primary">coaD</name>
    <name type="ordered locus">HPG27_1398</name>
</gene>
<sequence length="157" mass="17699">MQKIGIYPGTFDPVTNGHIDIIHRSSELFEKLIVAVAHSSAKNPMFSLKERLKMMQLATKSFKNVECVAFEGLLANLAKEYHCKVLVRGLRVVSDFEYELQMGYANKSLNHELETLYFMPTLQNAFISSSIVRSIIAHKGDASHLVPKEIYPLISKA</sequence>
<dbReference type="EC" id="2.7.7.3" evidence="1"/>
<dbReference type="EMBL" id="CP001173">
    <property type="protein sequence ID" value="ACI28143.1"/>
    <property type="molecule type" value="Genomic_DNA"/>
</dbReference>
<dbReference type="RefSeq" id="WP_001169275.1">
    <property type="nucleotide sequence ID" value="NC_011333.1"/>
</dbReference>
<dbReference type="SMR" id="B5Z994"/>
<dbReference type="KEGG" id="hpg:HPG27_1398"/>
<dbReference type="HOGENOM" id="CLU_100149_1_1_7"/>
<dbReference type="UniPathway" id="UPA00241">
    <property type="reaction ID" value="UER00355"/>
</dbReference>
<dbReference type="Proteomes" id="UP000001735">
    <property type="component" value="Chromosome"/>
</dbReference>
<dbReference type="GO" id="GO:0005737">
    <property type="term" value="C:cytoplasm"/>
    <property type="evidence" value="ECO:0007669"/>
    <property type="project" value="UniProtKB-SubCell"/>
</dbReference>
<dbReference type="GO" id="GO:0005524">
    <property type="term" value="F:ATP binding"/>
    <property type="evidence" value="ECO:0007669"/>
    <property type="project" value="UniProtKB-KW"/>
</dbReference>
<dbReference type="GO" id="GO:0004595">
    <property type="term" value="F:pantetheine-phosphate adenylyltransferase activity"/>
    <property type="evidence" value="ECO:0007669"/>
    <property type="project" value="UniProtKB-UniRule"/>
</dbReference>
<dbReference type="GO" id="GO:0015937">
    <property type="term" value="P:coenzyme A biosynthetic process"/>
    <property type="evidence" value="ECO:0007669"/>
    <property type="project" value="UniProtKB-UniRule"/>
</dbReference>
<dbReference type="CDD" id="cd02163">
    <property type="entry name" value="PPAT"/>
    <property type="match status" value="1"/>
</dbReference>
<dbReference type="Gene3D" id="3.40.50.620">
    <property type="entry name" value="HUPs"/>
    <property type="match status" value="1"/>
</dbReference>
<dbReference type="HAMAP" id="MF_00151">
    <property type="entry name" value="PPAT_bact"/>
    <property type="match status" value="1"/>
</dbReference>
<dbReference type="InterPro" id="IPR004821">
    <property type="entry name" value="Cyt_trans-like"/>
</dbReference>
<dbReference type="InterPro" id="IPR001980">
    <property type="entry name" value="PPAT"/>
</dbReference>
<dbReference type="InterPro" id="IPR014729">
    <property type="entry name" value="Rossmann-like_a/b/a_fold"/>
</dbReference>
<dbReference type="NCBIfam" id="TIGR01510">
    <property type="entry name" value="coaD_prev_kdtB"/>
    <property type="match status" value="1"/>
</dbReference>
<dbReference type="NCBIfam" id="TIGR00125">
    <property type="entry name" value="cyt_tran_rel"/>
    <property type="match status" value="1"/>
</dbReference>
<dbReference type="PANTHER" id="PTHR21342">
    <property type="entry name" value="PHOSPHOPANTETHEINE ADENYLYLTRANSFERASE"/>
    <property type="match status" value="1"/>
</dbReference>
<dbReference type="PANTHER" id="PTHR21342:SF1">
    <property type="entry name" value="PHOSPHOPANTETHEINE ADENYLYLTRANSFERASE"/>
    <property type="match status" value="1"/>
</dbReference>
<dbReference type="Pfam" id="PF01467">
    <property type="entry name" value="CTP_transf_like"/>
    <property type="match status" value="1"/>
</dbReference>
<dbReference type="PRINTS" id="PR01020">
    <property type="entry name" value="LPSBIOSNTHSS"/>
</dbReference>
<dbReference type="SUPFAM" id="SSF52374">
    <property type="entry name" value="Nucleotidylyl transferase"/>
    <property type="match status" value="1"/>
</dbReference>